<organism>
    <name type="scientific">Brucella abortus (strain S19)</name>
    <dbReference type="NCBI Taxonomy" id="430066"/>
    <lineage>
        <taxon>Bacteria</taxon>
        <taxon>Pseudomonadati</taxon>
        <taxon>Pseudomonadota</taxon>
        <taxon>Alphaproteobacteria</taxon>
        <taxon>Hyphomicrobiales</taxon>
        <taxon>Brucellaceae</taxon>
        <taxon>Brucella/Ochrobactrum group</taxon>
        <taxon>Brucella</taxon>
    </lineage>
</organism>
<feature type="chain" id="PRO_1000197354" description="Undecaprenyl-diphosphatase">
    <location>
        <begin position="1"/>
        <end position="268"/>
    </location>
</feature>
<feature type="transmembrane region" description="Helical" evidence="1">
    <location>
        <begin position="3"/>
        <end position="23"/>
    </location>
</feature>
<feature type="transmembrane region" description="Helical" evidence="1">
    <location>
        <begin position="46"/>
        <end position="66"/>
    </location>
</feature>
<feature type="transmembrane region" description="Helical" evidence="1">
    <location>
        <begin position="84"/>
        <end position="104"/>
    </location>
</feature>
<feature type="transmembrane region" description="Helical" evidence="1">
    <location>
        <begin position="107"/>
        <end position="127"/>
    </location>
</feature>
<feature type="transmembrane region" description="Helical" evidence="1">
    <location>
        <begin position="144"/>
        <end position="164"/>
    </location>
</feature>
<feature type="transmembrane region" description="Helical" evidence="1">
    <location>
        <begin position="185"/>
        <end position="205"/>
    </location>
</feature>
<feature type="transmembrane region" description="Helical" evidence="1">
    <location>
        <begin position="213"/>
        <end position="233"/>
    </location>
</feature>
<feature type="transmembrane region" description="Helical" evidence="1">
    <location>
        <begin position="246"/>
        <end position="266"/>
    </location>
</feature>
<dbReference type="EC" id="3.6.1.27" evidence="1"/>
<dbReference type="EMBL" id="CP000888">
    <property type="protein sequence ID" value="ACD74415.1"/>
    <property type="molecule type" value="Genomic_DNA"/>
</dbReference>
<dbReference type="RefSeq" id="WP_002965610.1">
    <property type="nucleotide sequence ID" value="NC_010740.1"/>
</dbReference>
<dbReference type="SMR" id="B2SC28"/>
<dbReference type="KEGG" id="bmc:BAbS19_II09300"/>
<dbReference type="HOGENOM" id="CLU_060296_2_0_5"/>
<dbReference type="Proteomes" id="UP000002565">
    <property type="component" value="Chromosome 2"/>
</dbReference>
<dbReference type="GO" id="GO:0005886">
    <property type="term" value="C:plasma membrane"/>
    <property type="evidence" value="ECO:0007669"/>
    <property type="project" value="UniProtKB-SubCell"/>
</dbReference>
<dbReference type="GO" id="GO:0050380">
    <property type="term" value="F:undecaprenyl-diphosphatase activity"/>
    <property type="evidence" value="ECO:0007669"/>
    <property type="project" value="UniProtKB-UniRule"/>
</dbReference>
<dbReference type="GO" id="GO:0071555">
    <property type="term" value="P:cell wall organization"/>
    <property type="evidence" value="ECO:0007669"/>
    <property type="project" value="UniProtKB-KW"/>
</dbReference>
<dbReference type="GO" id="GO:0009252">
    <property type="term" value="P:peptidoglycan biosynthetic process"/>
    <property type="evidence" value="ECO:0007669"/>
    <property type="project" value="UniProtKB-KW"/>
</dbReference>
<dbReference type="GO" id="GO:0008360">
    <property type="term" value="P:regulation of cell shape"/>
    <property type="evidence" value="ECO:0007669"/>
    <property type="project" value="UniProtKB-KW"/>
</dbReference>
<dbReference type="GO" id="GO:0046677">
    <property type="term" value="P:response to antibiotic"/>
    <property type="evidence" value="ECO:0007669"/>
    <property type="project" value="UniProtKB-UniRule"/>
</dbReference>
<dbReference type="HAMAP" id="MF_01006">
    <property type="entry name" value="Undec_diphosphatase"/>
    <property type="match status" value="1"/>
</dbReference>
<dbReference type="InterPro" id="IPR003824">
    <property type="entry name" value="UppP"/>
</dbReference>
<dbReference type="NCBIfam" id="NF001389">
    <property type="entry name" value="PRK00281.1-2"/>
    <property type="match status" value="1"/>
</dbReference>
<dbReference type="NCBIfam" id="TIGR00753">
    <property type="entry name" value="undec_PP_bacA"/>
    <property type="match status" value="1"/>
</dbReference>
<dbReference type="PANTHER" id="PTHR30622">
    <property type="entry name" value="UNDECAPRENYL-DIPHOSPHATASE"/>
    <property type="match status" value="1"/>
</dbReference>
<dbReference type="PANTHER" id="PTHR30622:SF3">
    <property type="entry name" value="UNDECAPRENYL-DIPHOSPHATASE"/>
    <property type="match status" value="1"/>
</dbReference>
<dbReference type="Pfam" id="PF02673">
    <property type="entry name" value="BacA"/>
    <property type="match status" value="1"/>
</dbReference>
<reference key="1">
    <citation type="journal article" date="2008" name="PLoS ONE">
        <title>Genome sequence of Brucella abortus vaccine strain S19 compared to virulent strains yields candidate virulence genes.</title>
        <authorList>
            <person name="Crasta O.R."/>
            <person name="Folkerts O."/>
            <person name="Fei Z."/>
            <person name="Mane S.P."/>
            <person name="Evans C."/>
            <person name="Martino-Catt S."/>
            <person name="Bricker B."/>
            <person name="Yu G."/>
            <person name="Du L."/>
            <person name="Sobral B.W."/>
        </authorList>
    </citation>
    <scope>NUCLEOTIDE SEQUENCE [LARGE SCALE GENOMIC DNA]</scope>
    <source>
        <strain>S19</strain>
    </source>
</reference>
<proteinExistence type="inferred from homology"/>
<protein>
    <recommendedName>
        <fullName evidence="1">Undecaprenyl-diphosphatase</fullName>
        <ecNumber evidence="1">3.6.1.27</ecNumber>
    </recommendedName>
    <alternativeName>
        <fullName evidence="1">Bacitracin resistance protein</fullName>
    </alternativeName>
    <alternativeName>
        <fullName evidence="1">Undecaprenyl pyrophosphate phosphatase</fullName>
    </alternativeName>
</protein>
<keyword id="KW-0046">Antibiotic resistance</keyword>
<keyword id="KW-0997">Cell inner membrane</keyword>
<keyword id="KW-1003">Cell membrane</keyword>
<keyword id="KW-0133">Cell shape</keyword>
<keyword id="KW-0961">Cell wall biogenesis/degradation</keyword>
<keyword id="KW-0378">Hydrolase</keyword>
<keyword id="KW-0472">Membrane</keyword>
<keyword id="KW-0573">Peptidoglycan synthesis</keyword>
<keyword id="KW-0812">Transmembrane</keyword>
<keyword id="KW-1133">Transmembrane helix</keyword>
<gene>
    <name evidence="1" type="primary">uppP</name>
    <name type="ordered locus">BAbS19_II09300</name>
</gene>
<evidence type="ECO:0000255" key="1">
    <source>
        <dbReference type="HAMAP-Rule" id="MF_01006"/>
    </source>
</evidence>
<name>UPPP_BRUA1</name>
<accession>B2SC28</accession>
<sequence length="268" mass="29169">MDFFNLLEAAFLGLIEGLTEFIPVSSTGHLLLIGHFLGFESTGKTFEVLIQLGAILAILSVYSAKLARIATDFPRDARTRRFVLGVLVAFLPAAVIGALAHGFIKGVLFETPMLVCIMLIVGGFILLWVDQLNLRPRYHNVMDYPLPICLAIGFIQCLAMIPGVSRSGSTIVGSLLLGADKRSAAEFSFFLAMPTMAGAFAYDLFKSRNILSFNDGALIVVGFIMAFISGVFVVRHLLDYVSRHGFALFGWWRLIVGSAGMAALIIWG</sequence>
<comment type="function">
    <text evidence="1">Catalyzes the dephosphorylation of undecaprenyl diphosphate (UPP). Confers resistance to bacitracin.</text>
</comment>
<comment type="catalytic activity">
    <reaction evidence="1">
        <text>di-trans,octa-cis-undecaprenyl diphosphate + H2O = di-trans,octa-cis-undecaprenyl phosphate + phosphate + H(+)</text>
        <dbReference type="Rhea" id="RHEA:28094"/>
        <dbReference type="ChEBI" id="CHEBI:15377"/>
        <dbReference type="ChEBI" id="CHEBI:15378"/>
        <dbReference type="ChEBI" id="CHEBI:43474"/>
        <dbReference type="ChEBI" id="CHEBI:58405"/>
        <dbReference type="ChEBI" id="CHEBI:60392"/>
        <dbReference type="EC" id="3.6.1.27"/>
    </reaction>
</comment>
<comment type="subcellular location">
    <subcellularLocation>
        <location evidence="1">Cell inner membrane</location>
        <topology evidence="1">Multi-pass membrane protein</topology>
    </subcellularLocation>
</comment>
<comment type="miscellaneous">
    <text>Bacitracin is thought to be involved in the inhibition of peptidoglycan synthesis by sequestering undecaprenyl diphosphate, thereby reducing the pool of lipid carrier available.</text>
</comment>
<comment type="similarity">
    <text evidence="1">Belongs to the UppP family.</text>
</comment>